<gene>
    <name evidence="1" type="primary">dapE</name>
    <name type="ordered locus">Mext_1633</name>
</gene>
<proteinExistence type="inferred from homology"/>
<name>DAPE_METEP</name>
<reference key="1">
    <citation type="submission" date="2007-12" db="EMBL/GenBank/DDBJ databases">
        <title>Complete sequence of Methylobacterium extorquens PA1.</title>
        <authorList>
            <consortium name="US DOE Joint Genome Institute"/>
            <person name="Copeland A."/>
            <person name="Lucas S."/>
            <person name="Lapidus A."/>
            <person name="Barry K."/>
            <person name="Glavina del Rio T."/>
            <person name="Dalin E."/>
            <person name="Tice H."/>
            <person name="Pitluck S."/>
            <person name="Saunders E."/>
            <person name="Brettin T."/>
            <person name="Bruce D."/>
            <person name="Detter J.C."/>
            <person name="Han C."/>
            <person name="Schmutz J."/>
            <person name="Larimer F."/>
            <person name="Land M."/>
            <person name="Hauser L."/>
            <person name="Kyrpides N."/>
            <person name="Kim E."/>
            <person name="Marx C."/>
            <person name="Richardson P."/>
        </authorList>
    </citation>
    <scope>NUCLEOTIDE SEQUENCE [LARGE SCALE GENOMIC DNA]</scope>
    <source>
        <strain>PA1</strain>
    </source>
</reference>
<dbReference type="EC" id="3.5.1.18" evidence="1"/>
<dbReference type="EMBL" id="CP000908">
    <property type="protein sequence ID" value="ABY30032.1"/>
    <property type="status" value="ALT_INIT"/>
    <property type="molecule type" value="Genomic_DNA"/>
</dbReference>
<dbReference type="SMR" id="A9W376"/>
<dbReference type="KEGG" id="mex:Mext_1633"/>
<dbReference type="eggNOG" id="COG0624">
    <property type="taxonomic scope" value="Bacteria"/>
</dbReference>
<dbReference type="HOGENOM" id="CLU_021802_4_0_5"/>
<dbReference type="UniPathway" id="UPA00034">
    <property type="reaction ID" value="UER00021"/>
</dbReference>
<dbReference type="GO" id="GO:0008777">
    <property type="term" value="F:acetylornithine deacetylase activity"/>
    <property type="evidence" value="ECO:0007669"/>
    <property type="project" value="TreeGrafter"/>
</dbReference>
<dbReference type="GO" id="GO:0050897">
    <property type="term" value="F:cobalt ion binding"/>
    <property type="evidence" value="ECO:0007669"/>
    <property type="project" value="UniProtKB-UniRule"/>
</dbReference>
<dbReference type="GO" id="GO:0009014">
    <property type="term" value="F:succinyl-diaminopimelate desuccinylase activity"/>
    <property type="evidence" value="ECO:0007669"/>
    <property type="project" value="UniProtKB-UniRule"/>
</dbReference>
<dbReference type="GO" id="GO:0008270">
    <property type="term" value="F:zinc ion binding"/>
    <property type="evidence" value="ECO:0007669"/>
    <property type="project" value="UniProtKB-UniRule"/>
</dbReference>
<dbReference type="GO" id="GO:0019877">
    <property type="term" value="P:diaminopimelate biosynthetic process"/>
    <property type="evidence" value="ECO:0007669"/>
    <property type="project" value="UniProtKB-UniRule"/>
</dbReference>
<dbReference type="GO" id="GO:0006526">
    <property type="term" value="P:L-arginine biosynthetic process"/>
    <property type="evidence" value="ECO:0007669"/>
    <property type="project" value="TreeGrafter"/>
</dbReference>
<dbReference type="GO" id="GO:0009089">
    <property type="term" value="P:lysine biosynthetic process via diaminopimelate"/>
    <property type="evidence" value="ECO:0007669"/>
    <property type="project" value="UniProtKB-UniRule"/>
</dbReference>
<dbReference type="CDD" id="cd03891">
    <property type="entry name" value="M20_DapE_proteobac"/>
    <property type="match status" value="1"/>
</dbReference>
<dbReference type="Gene3D" id="3.40.630.10">
    <property type="entry name" value="Zn peptidases"/>
    <property type="match status" value="2"/>
</dbReference>
<dbReference type="HAMAP" id="MF_01690">
    <property type="entry name" value="DapE"/>
    <property type="match status" value="1"/>
</dbReference>
<dbReference type="InterPro" id="IPR001261">
    <property type="entry name" value="ArgE/DapE_CS"/>
</dbReference>
<dbReference type="InterPro" id="IPR036264">
    <property type="entry name" value="Bact_exopeptidase_dim_dom"/>
</dbReference>
<dbReference type="InterPro" id="IPR005941">
    <property type="entry name" value="DapE_proteobac"/>
</dbReference>
<dbReference type="InterPro" id="IPR002933">
    <property type="entry name" value="Peptidase_M20"/>
</dbReference>
<dbReference type="InterPro" id="IPR011650">
    <property type="entry name" value="Peptidase_M20_dimer"/>
</dbReference>
<dbReference type="InterPro" id="IPR050072">
    <property type="entry name" value="Peptidase_M20A"/>
</dbReference>
<dbReference type="NCBIfam" id="TIGR01246">
    <property type="entry name" value="dapE_proteo"/>
    <property type="match status" value="1"/>
</dbReference>
<dbReference type="NCBIfam" id="NF009557">
    <property type="entry name" value="PRK13009.1"/>
    <property type="match status" value="1"/>
</dbReference>
<dbReference type="PANTHER" id="PTHR43808">
    <property type="entry name" value="ACETYLORNITHINE DEACETYLASE"/>
    <property type="match status" value="1"/>
</dbReference>
<dbReference type="PANTHER" id="PTHR43808:SF31">
    <property type="entry name" value="N-ACETYL-L-CITRULLINE DEACETYLASE"/>
    <property type="match status" value="1"/>
</dbReference>
<dbReference type="Pfam" id="PF07687">
    <property type="entry name" value="M20_dimer"/>
    <property type="match status" value="1"/>
</dbReference>
<dbReference type="Pfam" id="PF01546">
    <property type="entry name" value="Peptidase_M20"/>
    <property type="match status" value="1"/>
</dbReference>
<dbReference type="SUPFAM" id="SSF55031">
    <property type="entry name" value="Bacterial exopeptidase dimerisation domain"/>
    <property type="match status" value="1"/>
</dbReference>
<dbReference type="SUPFAM" id="SSF53187">
    <property type="entry name" value="Zn-dependent exopeptidases"/>
    <property type="match status" value="1"/>
</dbReference>
<dbReference type="PROSITE" id="PS00759">
    <property type="entry name" value="ARGE_DAPE_CPG2_2"/>
    <property type="match status" value="1"/>
</dbReference>
<accession>A9W376</accession>
<comment type="function">
    <text evidence="1">Catalyzes the hydrolysis of N-succinyl-L,L-diaminopimelic acid (SDAP), forming succinate and LL-2,6-diaminopimelate (DAP), an intermediate involved in the bacterial biosynthesis of lysine and meso-diaminopimelic acid, an essential component of bacterial cell walls.</text>
</comment>
<comment type="catalytic activity">
    <reaction evidence="1">
        <text>N-succinyl-(2S,6S)-2,6-diaminopimelate + H2O = (2S,6S)-2,6-diaminopimelate + succinate</text>
        <dbReference type="Rhea" id="RHEA:22608"/>
        <dbReference type="ChEBI" id="CHEBI:15377"/>
        <dbReference type="ChEBI" id="CHEBI:30031"/>
        <dbReference type="ChEBI" id="CHEBI:57609"/>
        <dbReference type="ChEBI" id="CHEBI:58087"/>
        <dbReference type="EC" id="3.5.1.18"/>
    </reaction>
</comment>
<comment type="cofactor">
    <cofactor evidence="1">
        <name>Zn(2+)</name>
        <dbReference type="ChEBI" id="CHEBI:29105"/>
    </cofactor>
    <cofactor evidence="1">
        <name>Co(2+)</name>
        <dbReference type="ChEBI" id="CHEBI:48828"/>
    </cofactor>
    <text evidence="1">Binds 2 Zn(2+) or Co(2+) ions per subunit.</text>
</comment>
<comment type="pathway">
    <text evidence="1">Amino-acid biosynthesis; L-lysine biosynthesis via DAP pathway; LL-2,6-diaminopimelate from (S)-tetrahydrodipicolinate (succinylase route): step 3/3.</text>
</comment>
<comment type="subunit">
    <text evidence="1">Homodimer.</text>
</comment>
<comment type="similarity">
    <text evidence="1">Belongs to the peptidase M20A family. DapE subfamily.</text>
</comment>
<comment type="sequence caution" evidence="2">
    <conflict type="erroneous initiation">
        <sequence resource="EMBL-CDS" id="ABY30032"/>
    </conflict>
</comment>
<evidence type="ECO:0000255" key="1">
    <source>
        <dbReference type="HAMAP-Rule" id="MF_01690"/>
    </source>
</evidence>
<evidence type="ECO:0000305" key="2"/>
<protein>
    <recommendedName>
        <fullName evidence="1">Succinyl-diaminopimelate desuccinylase</fullName>
        <shortName evidence="1">SDAP desuccinylase</shortName>
        <ecNumber evidence="1">3.5.1.18</ecNumber>
    </recommendedName>
    <alternativeName>
        <fullName evidence="1">N-succinyl-LL-2,6-diaminoheptanedioate amidohydrolase</fullName>
    </alternativeName>
</protein>
<keyword id="KW-0028">Amino-acid biosynthesis</keyword>
<keyword id="KW-0170">Cobalt</keyword>
<keyword id="KW-0220">Diaminopimelate biosynthesis</keyword>
<keyword id="KW-0378">Hydrolase</keyword>
<keyword id="KW-0457">Lysine biosynthesis</keyword>
<keyword id="KW-0479">Metal-binding</keyword>
<keyword id="KW-0862">Zinc</keyword>
<organism>
    <name type="scientific">Methylorubrum extorquens (strain PA1)</name>
    <name type="common">Methylobacterium extorquens</name>
    <dbReference type="NCBI Taxonomy" id="419610"/>
    <lineage>
        <taxon>Bacteria</taxon>
        <taxon>Pseudomonadati</taxon>
        <taxon>Pseudomonadota</taxon>
        <taxon>Alphaproteobacteria</taxon>
        <taxon>Hyphomicrobiales</taxon>
        <taxon>Methylobacteriaceae</taxon>
        <taxon>Methylorubrum</taxon>
    </lineage>
</organism>
<feature type="chain" id="PRO_0000375613" description="Succinyl-diaminopimelate desuccinylase">
    <location>
        <begin position="1"/>
        <end position="385"/>
    </location>
</feature>
<feature type="active site" evidence="1">
    <location>
        <position position="75"/>
    </location>
</feature>
<feature type="active site" description="Proton acceptor" evidence="1">
    <location>
        <position position="141"/>
    </location>
</feature>
<feature type="binding site" evidence="1">
    <location>
        <position position="73"/>
    </location>
    <ligand>
        <name>Zn(2+)</name>
        <dbReference type="ChEBI" id="CHEBI:29105"/>
        <label>1</label>
    </ligand>
</feature>
<feature type="binding site" evidence="1">
    <location>
        <position position="106"/>
    </location>
    <ligand>
        <name>Zn(2+)</name>
        <dbReference type="ChEBI" id="CHEBI:29105"/>
        <label>1</label>
    </ligand>
</feature>
<feature type="binding site" evidence="1">
    <location>
        <position position="106"/>
    </location>
    <ligand>
        <name>Zn(2+)</name>
        <dbReference type="ChEBI" id="CHEBI:29105"/>
        <label>2</label>
    </ligand>
</feature>
<feature type="binding site" evidence="1">
    <location>
        <position position="142"/>
    </location>
    <ligand>
        <name>Zn(2+)</name>
        <dbReference type="ChEBI" id="CHEBI:29105"/>
        <label>2</label>
    </ligand>
</feature>
<feature type="binding site" evidence="1">
    <location>
        <position position="170"/>
    </location>
    <ligand>
        <name>Zn(2+)</name>
        <dbReference type="ChEBI" id="CHEBI:29105"/>
        <label>1</label>
    </ligand>
</feature>
<feature type="binding site" evidence="1">
    <location>
        <position position="359"/>
    </location>
    <ligand>
        <name>Zn(2+)</name>
        <dbReference type="ChEBI" id="CHEBI:29105"/>
        <label>2</label>
    </ligand>
</feature>
<sequence length="385" mass="40816">MSDHSPLALAQALIRCPSVTPEEGGALSFLADRLSRAGFSVERPVFSEPGTPDIQNLYARIGTAGPVLVFAGHTDVVPPGEVGSWTHGPFSGEVAEGFLYGRGAVDMKGGIACMLAATLAFLDRHGPDFGGSIAFLVTGDEEGPAVNGTVKLLDWAKARGERFDHCLLGEPTNPDTLGEMIKIGRRGSLTGRITVHGRQGHVAYPHRAENPIPGLLRLASALTADPLDGGTAHFDASNLEFTTIDVGNPATNVIPASAKAVFNVRFNDDWTADTLGAEIRRRLEAAAGNAVRFSLDLQPSNSPAFLTQPDAFVDRVADAIEAETGRRPALSTTGGTSDARFIKDACPVIEFGLVGRTMHETDERVAVADLDRLTAIYGRVLDAYF</sequence>